<name>EFTS_LACLA</name>
<sequence>MAVTAAQVKELREKTGAGIMDAKRALVETDGNMEAAAELLREKGIAKAAKKADRVAAEGLTGIAVNGNVAAIVELNSETDFVAKNDQFVALVKETAELIASKKPATNEEALALETASGITLEAELVQATATIGEKITFRRFAVIEKTDAQHFGAYQHNGGKIGVVSVVEGADETLAKQVSMHIAAMNPTVLSADELDSEFVKAELAQMNHKIDEDNASRVLVNKPELPHHEFGSKSQLTEEVLAAAKASFEEELKAEGKPEKIWDKILPGKMAKFIVDNTKVDQQFALLAQLYIMDDSKTVEAFLESKGAKAIAFTRFEVGEGIEKAETDFAAEVEAAKAGL</sequence>
<protein>
    <recommendedName>
        <fullName>Elongation factor Ts</fullName>
        <shortName>EF-Ts</shortName>
    </recommendedName>
</protein>
<keyword id="KW-0963">Cytoplasm</keyword>
<keyword id="KW-0251">Elongation factor</keyword>
<keyword id="KW-0648">Protein biosynthesis</keyword>
<keyword id="KW-1185">Reference proteome</keyword>
<gene>
    <name type="primary">tsf</name>
    <name type="ordered locus">LL2152</name>
    <name type="ORF">L0376</name>
</gene>
<reference key="1">
    <citation type="journal article" date="2001" name="Genome Res.">
        <title>The complete genome sequence of the lactic acid bacterium Lactococcus lactis ssp. lactis IL1403.</title>
        <authorList>
            <person name="Bolotin A."/>
            <person name="Wincker P."/>
            <person name="Mauger S."/>
            <person name="Jaillon O."/>
            <person name="Malarme K."/>
            <person name="Weissenbach J."/>
            <person name="Ehrlich S.D."/>
            <person name="Sorokin A."/>
        </authorList>
    </citation>
    <scope>NUCLEOTIDE SEQUENCE [LARGE SCALE GENOMIC DNA]</scope>
    <source>
        <strain>IL1403</strain>
    </source>
</reference>
<comment type="function">
    <text evidence="1">Associates with the EF-Tu.GDP complex and induces the exchange of GDP to GTP. It remains bound to the aminoacyl-tRNA.EF-Tu.GTP complex up to the GTP hydrolysis stage on the ribosome (By similarity).</text>
</comment>
<comment type="subcellular location">
    <subcellularLocation>
        <location evidence="1">Cytoplasm</location>
    </subcellularLocation>
</comment>
<comment type="similarity">
    <text evidence="2">Belongs to the EF-Ts family.</text>
</comment>
<dbReference type="EMBL" id="AE005176">
    <property type="protein sequence ID" value="AAK06250.1"/>
    <property type="molecule type" value="Genomic_DNA"/>
</dbReference>
<dbReference type="PIR" id="H86893">
    <property type="entry name" value="H86893"/>
</dbReference>
<dbReference type="RefSeq" id="NP_268309.1">
    <property type="nucleotide sequence ID" value="NC_002662.1"/>
</dbReference>
<dbReference type="RefSeq" id="WP_010906339.1">
    <property type="nucleotide sequence ID" value="NC_002662.1"/>
</dbReference>
<dbReference type="SMR" id="Q9CDR5"/>
<dbReference type="PaxDb" id="272623-L0376"/>
<dbReference type="EnsemblBacteria" id="AAK06250">
    <property type="protein sequence ID" value="AAK06250"/>
    <property type="gene ID" value="L0376"/>
</dbReference>
<dbReference type="KEGG" id="lla:L0376"/>
<dbReference type="PATRIC" id="fig|272623.7.peg.2311"/>
<dbReference type="eggNOG" id="COG0264">
    <property type="taxonomic scope" value="Bacteria"/>
</dbReference>
<dbReference type="HOGENOM" id="CLU_047155_0_1_9"/>
<dbReference type="OrthoDB" id="9808348at2"/>
<dbReference type="Proteomes" id="UP000002196">
    <property type="component" value="Chromosome"/>
</dbReference>
<dbReference type="GO" id="GO:0009986">
    <property type="term" value="C:cell surface"/>
    <property type="evidence" value="ECO:0000314"/>
    <property type="project" value="CAFA"/>
</dbReference>
<dbReference type="GO" id="GO:0005737">
    <property type="term" value="C:cytoplasm"/>
    <property type="evidence" value="ECO:0007669"/>
    <property type="project" value="UniProtKB-SubCell"/>
</dbReference>
<dbReference type="GO" id="GO:2001065">
    <property type="term" value="F:mannan binding"/>
    <property type="evidence" value="ECO:0000314"/>
    <property type="project" value="CAFA"/>
</dbReference>
<dbReference type="GO" id="GO:0003746">
    <property type="term" value="F:translation elongation factor activity"/>
    <property type="evidence" value="ECO:0007669"/>
    <property type="project" value="UniProtKB-UniRule"/>
</dbReference>
<dbReference type="CDD" id="cd14275">
    <property type="entry name" value="UBA_EF-Ts"/>
    <property type="match status" value="1"/>
</dbReference>
<dbReference type="FunFam" id="1.10.286.20:FF:000004">
    <property type="entry name" value="Elongation factor Ts"/>
    <property type="match status" value="1"/>
</dbReference>
<dbReference type="FunFam" id="1.10.8.10:FF:000001">
    <property type="entry name" value="Elongation factor Ts"/>
    <property type="match status" value="1"/>
</dbReference>
<dbReference type="Gene3D" id="1.10.286.20">
    <property type="match status" value="2"/>
</dbReference>
<dbReference type="Gene3D" id="1.10.8.10">
    <property type="entry name" value="DNA helicase RuvA subunit, C-terminal domain"/>
    <property type="match status" value="1"/>
</dbReference>
<dbReference type="Gene3D" id="3.30.479.20">
    <property type="entry name" value="Elongation factor Ts, dimerisation domain"/>
    <property type="match status" value="3"/>
</dbReference>
<dbReference type="HAMAP" id="MF_00050">
    <property type="entry name" value="EF_Ts"/>
    <property type="match status" value="1"/>
</dbReference>
<dbReference type="InterPro" id="IPR036402">
    <property type="entry name" value="EF-Ts_dimer_sf"/>
</dbReference>
<dbReference type="InterPro" id="IPR001816">
    <property type="entry name" value="Transl_elong_EFTs/EF1B"/>
</dbReference>
<dbReference type="InterPro" id="IPR014039">
    <property type="entry name" value="Transl_elong_EFTs/EF1B_dimer"/>
</dbReference>
<dbReference type="InterPro" id="IPR018101">
    <property type="entry name" value="Transl_elong_Ts_CS"/>
</dbReference>
<dbReference type="InterPro" id="IPR009060">
    <property type="entry name" value="UBA-like_sf"/>
</dbReference>
<dbReference type="NCBIfam" id="TIGR00116">
    <property type="entry name" value="tsf"/>
    <property type="match status" value="1"/>
</dbReference>
<dbReference type="PANTHER" id="PTHR11741">
    <property type="entry name" value="ELONGATION FACTOR TS"/>
    <property type="match status" value="1"/>
</dbReference>
<dbReference type="PANTHER" id="PTHR11741:SF0">
    <property type="entry name" value="ELONGATION FACTOR TS, MITOCHONDRIAL"/>
    <property type="match status" value="1"/>
</dbReference>
<dbReference type="Pfam" id="PF00889">
    <property type="entry name" value="EF_TS"/>
    <property type="match status" value="2"/>
</dbReference>
<dbReference type="SUPFAM" id="SSF54713">
    <property type="entry name" value="Elongation factor Ts (EF-Ts), dimerisation domain"/>
    <property type="match status" value="1"/>
</dbReference>
<dbReference type="SUPFAM" id="SSF46934">
    <property type="entry name" value="UBA-like"/>
    <property type="match status" value="1"/>
</dbReference>
<dbReference type="PROSITE" id="PS01126">
    <property type="entry name" value="EF_TS_1"/>
    <property type="match status" value="1"/>
</dbReference>
<dbReference type="PROSITE" id="PS01127">
    <property type="entry name" value="EF_TS_2"/>
    <property type="match status" value="1"/>
</dbReference>
<accession>Q9CDR5</accession>
<organism>
    <name type="scientific">Lactococcus lactis subsp. lactis (strain IL1403)</name>
    <name type="common">Streptococcus lactis</name>
    <dbReference type="NCBI Taxonomy" id="272623"/>
    <lineage>
        <taxon>Bacteria</taxon>
        <taxon>Bacillati</taxon>
        <taxon>Bacillota</taxon>
        <taxon>Bacilli</taxon>
        <taxon>Lactobacillales</taxon>
        <taxon>Streptococcaceae</taxon>
        <taxon>Lactococcus</taxon>
    </lineage>
</organism>
<evidence type="ECO:0000250" key="1"/>
<evidence type="ECO:0000305" key="2"/>
<proteinExistence type="inferred from homology"/>
<feature type="chain" id="PRO_0000161135" description="Elongation factor Ts">
    <location>
        <begin position="1"/>
        <end position="342"/>
    </location>
</feature>
<feature type="region of interest" description="Involved in Mg(2+) ion dislocation from EF-Tu" evidence="1">
    <location>
        <begin position="79"/>
        <end position="82"/>
    </location>
</feature>